<evidence type="ECO:0000255" key="1">
    <source>
        <dbReference type="HAMAP-Rule" id="MF_00808"/>
    </source>
</evidence>
<keyword id="KW-0150">Chloroplast</keyword>
<keyword id="KW-0472">Membrane</keyword>
<keyword id="KW-0602">Photosynthesis</keyword>
<keyword id="KW-0604">Photosystem II</keyword>
<keyword id="KW-0934">Plastid</keyword>
<keyword id="KW-0793">Thylakoid</keyword>
<keyword id="KW-0812">Transmembrane</keyword>
<keyword id="KW-1133">Transmembrane helix</keyword>
<proteinExistence type="inferred from homology"/>
<feature type="chain" id="PRO_0000217970" description="Photosystem II reaction center protein T">
    <location>
        <begin position="1"/>
        <end position="35"/>
    </location>
</feature>
<feature type="transmembrane region" description="Helical" evidence="1">
    <location>
        <begin position="3"/>
        <end position="23"/>
    </location>
</feature>
<gene>
    <name evidence="1" type="primary">psbT</name>
</gene>
<sequence length="35" mass="4077">MEALVYTFLLVSTLGIIFFAIFFREPPKVPTKKMK</sequence>
<protein>
    <recommendedName>
        <fullName evidence="1">Photosystem II reaction center protein T</fullName>
        <shortName evidence="1">PSII-T</shortName>
    </recommendedName>
</protein>
<name>PSBT_PLAOC</name>
<organism>
    <name type="scientific">Platanus occidentalis</name>
    <name type="common">Sycamore</name>
    <name type="synonym">American plane tree</name>
    <dbReference type="NCBI Taxonomy" id="4403"/>
    <lineage>
        <taxon>Eukaryota</taxon>
        <taxon>Viridiplantae</taxon>
        <taxon>Streptophyta</taxon>
        <taxon>Embryophyta</taxon>
        <taxon>Tracheophyta</taxon>
        <taxon>Spermatophyta</taxon>
        <taxon>Magnoliopsida</taxon>
        <taxon>Proteales</taxon>
        <taxon>Platanaceae</taxon>
        <taxon>Platanus</taxon>
    </lineage>
</organism>
<geneLocation type="chloroplast"/>
<dbReference type="EMBL" id="AF528909">
    <property type="protein sequence ID" value="AAQ09421.1"/>
    <property type="molecule type" value="Genomic_DNA"/>
</dbReference>
<dbReference type="EMBL" id="DQ923116">
    <property type="protein sequence ID" value="ABI49806.1"/>
    <property type="molecule type" value="Genomic_DNA"/>
</dbReference>
<dbReference type="RefSeq" id="YP_740592.1">
    <property type="nucleotide sequence ID" value="NC_008335.1"/>
</dbReference>
<dbReference type="SMR" id="Q6EYF2"/>
<dbReference type="GeneID" id="4271255"/>
<dbReference type="GO" id="GO:0009535">
    <property type="term" value="C:chloroplast thylakoid membrane"/>
    <property type="evidence" value="ECO:0007669"/>
    <property type="project" value="UniProtKB-SubCell"/>
</dbReference>
<dbReference type="GO" id="GO:0009539">
    <property type="term" value="C:photosystem II reaction center"/>
    <property type="evidence" value="ECO:0007669"/>
    <property type="project" value="InterPro"/>
</dbReference>
<dbReference type="GO" id="GO:0015979">
    <property type="term" value="P:photosynthesis"/>
    <property type="evidence" value="ECO:0007669"/>
    <property type="project" value="UniProtKB-UniRule"/>
</dbReference>
<dbReference type="HAMAP" id="MF_00808">
    <property type="entry name" value="PSII_PsbT"/>
    <property type="match status" value="1"/>
</dbReference>
<dbReference type="InterPro" id="IPR001743">
    <property type="entry name" value="PSII_PsbT"/>
</dbReference>
<dbReference type="InterPro" id="IPR037268">
    <property type="entry name" value="PSII_PsbT_sf"/>
</dbReference>
<dbReference type="PANTHER" id="PTHR36411">
    <property type="match status" value="1"/>
</dbReference>
<dbReference type="PANTHER" id="PTHR36411:SF2">
    <property type="entry name" value="PHOTOSYSTEM II REACTION CENTER PROTEIN T"/>
    <property type="match status" value="1"/>
</dbReference>
<dbReference type="Pfam" id="PF01405">
    <property type="entry name" value="PsbT"/>
    <property type="match status" value="1"/>
</dbReference>
<dbReference type="SUPFAM" id="SSF161029">
    <property type="entry name" value="Photosystem II reaction center protein T, PsbT"/>
    <property type="match status" value="1"/>
</dbReference>
<reference key="1">
    <citation type="submission" date="2002-07" db="EMBL/GenBank/DDBJ databases">
        <title>Parsing out signal and noise for seed-plant phylogenetic inference.</title>
        <authorList>
            <person name="Graham S.W."/>
            <person name="Rai H.S."/>
            <person name="Ikegami K."/>
            <person name="Reeves P.A."/>
            <person name="Olmstead R.G."/>
        </authorList>
    </citation>
    <scope>NUCLEOTIDE SEQUENCE [GENOMIC DNA]</scope>
</reference>
<reference key="2">
    <citation type="journal article" date="2006" name="BMC Plant Biol.">
        <title>Rapid and accurate pyrosequencing of angiosperm plastid genomes.</title>
        <authorList>
            <person name="Moore M.J."/>
            <person name="Dhingra A."/>
            <person name="Soltis P.S."/>
            <person name="Shaw R."/>
            <person name="Farmerie W.G."/>
            <person name="Folta K.M."/>
            <person name="Soltis D.E."/>
        </authorList>
    </citation>
    <scope>NUCLEOTIDE SEQUENCE [LARGE SCALE GENOMIC DNA]</scope>
</reference>
<comment type="function">
    <text evidence="1">Found at the monomer-monomer interface of the photosystem II (PS II) dimer, plays a role in assembly and dimerization of PSII. PSII is a light-driven water plastoquinone oxidoreductase, using light energy to abstract electrons from H(2)O, generating a proton gradient subsequently used for ATP formation.</text>
</comment>
<comment type="subunit">
    <text evidence="1">PSII is composed of 1 copy each of membrane proteins PsbA, PsbB, PsbC, PsbD, PsbE, PsbF, PsbH, PsbI, PsbJ, PsbK, PsbL, PsbM, PsbT, PsbY, PsbZ, Psb30/Ycf12, at least 3 peripheral proteins of the oxygen-evolving complex and a large number of cofactors. It forms dimeric complexes.</text>
</comment>
<comment type="subcellular location">
    <subcellularLocation>
        <location evidence="1">Plastid</location>
        <location evidence="1">Chloroplast thylakoid membrane</location>
        <topology evidence="1">Single-pass membrane protein</topology>
    </subcellularLocation>
</comment>
<comment type="similarity">
    <text evidence="1">Belongs to the PsbT family.</text>
</comment>
<accession>Q6EYF2</accession>
<accession>Q09G19</accession>